<comment type="function">
    <text evidence="1">Catalyzes the NADPH-dependent reduction of N-acetyl-5-glutamyl phosphate to yield N-acetyl-L-glutamate 5-semialdehyde.</text>
</comment>
<comment type="catalytic activity">
    <reaction evidence="1">
        <text>N-acetyl-L-glutamate 5-semialdehyde + phosphate + NADP(+) = N-acetyl-L-glutamyl 5-phosphate + NADPH + H(+)</text>
        <dbReference type="Rhea" id="RHEA:21588"/>
        <dbReference type="ChEBI" id="CHEBI:15378"/>
        <dbReference type="ChEBI" id="CHEBI:29123"/>
        <dbReference type="ChEBI" id="CHEBI:43474"/>
        <dbReference type="ChEBI" id="CHEBI:57783"/>
        <dbReference type="ChEBI" id="CHEBI:57936"/>
        <dbReference type="ChEBI" id="CHEBI:58349"/>
        <dbReference type="EC" id="1.2.1.38"/>
    </reaction>
</comment>
<comment type="pathway">
    <text evidence="1">Amino-acid biosynthesis; L-arginine biosynthesis; N(2)-acetyl-L-ornithine from L-glutamate: step 3/4.</text>
</comment>
<comment type="subcellular location">
    <subcellularLocation>
        <location evidence="1">Cytoplasm</location>
    </subcellularLocation>
</comment>
<comment type="similarity">
    <text evidence="1">Belongs to the NAGSA dehydrogenase family. Type 1 subfamily.</text>
</comment>
<accession>Q7UVL4</accession>
<organism>
    <name type="scientific">Rhodopirellula baltica (strain DSM 10527 / NCIMB 13988 / SH1)</name>
    <dbReference type="NCBI Taxonomy" id="243090"/>
    <lineage>
        <taxon>Bacteria</taxon>
        <taxon>Pseudomonadati</taxon>
        <taxon>Planctomycetota</taxon>
        <taxon>Planctomycetia</taxon>
        <taxon>Pirellulales</taxon>
        <taxon>Pirellulaceae</taxon>
        <taxon>Rhodopirellula</taxon>
    </lineage>
</organism>
<protein>
    <recommendedName>
        <fullName evidence="1">N-acetyl-gamma-glutamyl-phosphate reductase</fullName>
        <shortName evidence="1">AGPR</shortName>
        <ecNumber evidence="1">1.2.1.38</ecNumber>
    </recommendedName>
    <alternativeName>
        <fullName evidence="1">N-acetyl-glutamate semialdehyde dehydrogenase</fullName>
        <shortName evidence="1">NAGSA dehydrogenase</shortName>
    </alternativeName>
</protein>
<reference key="1">
    <citation type="journal article" date="2003" name="Proc. Natl. Acad. Sci. U.S.A.">
        <title>Complete genome sequence of the marine planctomycete Pirellula sp. strain 1.</title>
        <authorList>
            <person name="Gloeckner F.O."/>
            <person name="Kube M."/>
            <person name="Bauer M."/>
            <person name="Teeling H."/>
            <person name="Lombardot T."/>
            <person name="Ludwig W."/>
            <person name="Gade D."/>
            <person name="Beck A."/>
            <person name="Borzym K."/>
            <person name="Heitmann K."/>
            <person name="Rabus R."/>
            <person name="Schlesner H."/>
            <person name="Amann R."/>
            <person name="Reinhardt R."/>
        </authorList>
    </citation>
    <scope>NUCLEOTIDE SEQUENCE [LARGE SCALE GENOMIC DNA]</scope>
    <source>
        <strain>DSM 10527 / NCIMB 13988 / SH1</strain>
    </source>
</reference>
<dbReference type="EC" id="1.2.1.38" evidence="1"/>
<dbReference type="EMBL" id="BX294137">
    <property type="protein sequence ID" value="CAD72708.1"/>
    <property type="molecule type" value="Genomic_DNA"/>
</dbReference>
<dbReference type="RefSeq" id="NP_865024.1">
    <property type="nucleotide sequence ID" value="NC_005027.1"/>
</dbReference>
<dbReference type="RefSeq" id="WP_011118924.1">
    <property type="nucleotide sequence ID" value="NC_005027.1"/>
</dbReference>
<dbReference type="SMR" id="Q7UVL4"/>
<dbReference type="FunCoup" id="Q7UVL4">
    <property type="interactions" value="290"/>
</dbReference>
<dbReference type="STRING" id="243090.RB2552"/>
<dbReference type="EnsemblBacteria" id="CAD72708">
    <property type="protein sequence ID" value="CAD72708"/>
    <property type="gene ID" value="RB2552"/>
</dbReference>
<dbReference type="KEGG" id="rba:RB2552"/>
<dbReference type="PATRIC" id="fig|243090.15.peg.1171"/>
<dbReference type="eggNOG" id="COG0002">
    <property type="taxonomic scope" value="Bacteria"/>
</dbReference>
<dbReference type="HOGENOM" id="CLU_006384_0_1_0"/>
<dbReference type="InParanoid" id="Q7UVL4"/>
<dbReference type="OrthoDB" id="9801289at2"/>
<dbReference type="UniPathway" id="UPA00068">
    <property type="reaction ID" value="UER00108"/>
</dbReference>
<dbReference type="Proteomes" id="UP000001025">
    <property type="component" value="Chromosome"/>
</dbReference>
<dbReference type="GO" id="GO:0005737">
    <property type="term" value="C:cytoplasm"/>
    <property type="evidence" value="ECO:0007669"/>
    <property type="project" value="UniProtKB-SubCell"/>
</dbReference>
<dbReference type="GO" id="GO:0003942">
    <property type="term" value="F:N-acetyl-gamma-glutamyl-phosphate reductase activity"/>
    <property type="evidence" value="ECO:0007669"/>
    <property type="project" value="UniProtKB-UniRule"/>
</dbReference>
<dbReference type="GO" id="GO:0051287">
    <property type="term" value="F:NAD binding"/>
    <property type="evidence" value="ECO:0007669"/>
    <property type="project" value="InterPro"/>
</dbReference>
<dbReference type="GO" id="GO:0070401">
    <property type="term" value="F:NADP+ binding"/>
    <property type="evidence" value="ECO:0007669"/>
    <property type="project" value="InterPro"/>
</dbReference>
<dbReference type="GO" id="GO:0006526">
    <property type="term" value="P:L-arginine biosynthetic process"/>
    <property type="evidence" value="ECO:0007669"/>
    <property type="project" value="UniProtKB-UniRule"/>
</dbReference>
<dbReference type="CDD" id="cd23934">
    <property type="entry name" value="AGPR_1_C"/>
    <property type="match status" value="1"/>
</dbReference>
<dbReference type="CDD" id="cd17895">
    <property type="entry name" value="AGPR_1_N"/>
    <property type="match status" value="1"/>
</dbReference>
<dbReference type="Gene3D" id="3.30.360.10">
    <property type="entry name" value="Dihydrodipicolinate Reductase, domain 2"/>
    <property type="match status" value="1"/>
</dbReference>
<dbReference type="Gene3D" id="3.40.50.720">
    <property type="entry name" value="NAD(P)-binding Rossmann-like Domain"/>
    <property type="match status" value="1"/>
</dbReference>
<dbReference type="HAMAP" id="MF_00150">
    <property type="entry name" value="ArgC_type1"/>
    <property type="match status" value="1"/>
</dbReference>
<dbReference type="InterPro" id="IPR023013">
    <property type="entry name" value="AGPR_AS"/>
</dbReference>
<dbReference type="InterPro" id="IPR000706">
    <property type="entry name" value="AGPR_type-1"/>
</dbReference>
<dbReference type="InterPro" id="IPR036291">
    <property type="entry name" value="NAD(P)-bd_dom_sf"/>
</dbReference>
<dbReference type="InterPro" id="IPR050085">
    <property type="entry name" value="NAGSA_dehydrogenase"/>
</dbReference>
<dbReference type="InterPro" id="IPR000534">
    <property type="entry name" value="Semialdehyde_DH_NAD-bd"/>
</dbReference>
<dbReference type="NCBIfam" id="TIGR01850">
    <property type="entry name" value="argC"/>
    <property type="match status" value="1"/>
</dbReference>
<dbReference type="PANTHER" id="PTHR32338:SF10">
    <property type="entry name" value="N-ACETYL-GAMMA-GLUTAMYL-PHOSPHATE REDUCTASE, CHLOROPLASTIC-RELATED"/>
    <property type="match status" value="1"/>
</dbReference>
<dbReference type="PANTHER" id="PTHR32338">
    <property type="entry name" value="N-ACETYL-GAMMA-GLUTAMYL-PHOSPHATE REDUCTASE, CHLOROPLASTIC-RELATED-RELATED"/>
    <property type="match status" value="1"/>
</dbReference>
<dbReference type="Pfam" id="PF01118">
    <property type="entry name" value="Semialdhyde_dh"/>
    <property type="match status" value="1"/>
</dbReference>
<dbReference type="Pfam" id="PF22698">
    <property type="entry name" value="Semialdhyde_dhC_1"/>
    <property type="match status" value="1"/>
</dbReference>
<dbReference type="SMART" id="SM00859">
    <property type="entry name" value="Semialdhyde_dh"/>
    <property type="match status" value="1"/>
</dbReference>
<dbReference type="SUPFAM" id="SSF55347">
    <property type="entry name" value="Glyceraldehyde-3-phosphate dehydrogenase-like, C-terminal domain"/>
    <property type="match status" value="1"/>
</dbReference>
<dbReference type="SUPFAM" id="SSF51735">
    <property type="entry name" value="NAD(P)-binding Rossmann-fold domains"/>
    <property type="match status" value="1"/>
</dbReference>
<dbReference type="PROSITE" id="PS01224">
    <property type="entry name" value="ARGC"/>
    <property type="match status" value="1"/>
</dbReference>
<sequence>MSSSNLRVALVGSTGYTALEVARLLLTHPGADLVVATSRQDEGKPLSEIHPMLAGRCDVTLQPLDADVIAKSADVAMCCLPHGASAESVKQLAEAGMRVIDFSADFRLSSLETYQHWYGVKHPWPERIGDVVYGMPEFFADEIRSADIVANPGCYPTSAIMPLAPLVKAGLIETDDIIVDSKSGVSGAGRSPKLGTLYCETNESISAYAVGTHRHAPEIADLVERIAGAPIEVMFTPHLTPMDRGILSTIYVKPVGKAGSVEDAVRAMMSLLRDTYSDQPCVHVVDHLPATKYVAGTNHVQISVRPSGKRAVIVCAIDNLTKGASGAAVQNMNVMFGLPETAGLLM</sequence>
<name>ARGC_RHOBA</name>
<keyword id="KW-0028">Amino-acid biosynthesis</keyword>
<keyword id="KW-0055">Arginine biosynthesis</keyword>
<keyword id="KW-0963">Cytoplasm</keyword>
<keyword id="KW-0521">NADP</keyword>
<keyword id="KW-0560">Oxidoreductase</keyword>
<keyword id="KW-1185">Reference proteome</keyword>
<gene>
    <name evidence="1" type="primary">argC</name>
    <name type="ordered locus">RB2552</name>
</gene>
<feature type="chain" id="PRO_0000112440" description="N-acetyl-gamma-glutamyl-phosphate reductase">
    <location>
        <begin position="1"/>
        <end position="346"/>
    </location>
</feature>
<feature type="active site" evidence="1">
    <location>
        <position position="154"/>
    </location>
</feature>
<evidence type="ECO:0000255" key="1">
    <source>
        <dbReference type="HAMAP-Rule" id="MF_00150"/>
    </source>
</evidence>
<proteinExistence type="inferred from homology"/>